<proteinExistence type="inferred from homology"/>
<organism>
    <name type="scientific">Staphylococcus aureus (strain USA300)</name>
    <dbReference type="NCBI Taxonomy" id="367830"/>
    <lineage>
        <taxon>Bacteria</taxon>
        <taxon>Bacillati</taxon>
        <taxon>Bacillota</taxon>
        <taxon>Bacilli</taxon>
        <taxon>Bacillales</taxon>
        <taxon>Staphylococcaceae</taxon>
        <taxon>Staphylococcus</taxon>
    </lineage>
</organism>
<evidence type="ECO:0000255" key="1">
    <source>
        <dbReference type="PROSITE-ProRule" id="PRU00303"/>
    </source>
</evidence>
<evidence type="ECO:0000305" key="2"/>
<comment type="subcellular location">
    <subcellularLocation>
        <location evidence="1">Cell membrane</location>
        <topology evidence="1">Lipid-anchor</topology>
    </subcellularLocation>
</comment>
<comment type="similarity">
    <text evidence="2">Belongs to the staphylococcal tandem lipoprotein family.</text>
</comment>
<keyword id="KW-1003">Cell membrane</keyword>
<keyword id="KW-0449">Lipoprotein</keyword>
<keyword id="KW-0472">Membrane</keyword>
<keyword id="KW-0564">Palmitate</keyword>
<keyword id="KW-0732">Signal</keyword>
<name>Y103_STAA3</name>
<reference key="1">
    <citation type="journal article" date="2006" name="Lancet">
        <title>Complete genome sequence of USA300, an epidemic clone of community-acquired meticillin-resistant Staphylococcus aureus.</title>
        <authorList>
            <person name="Diep B.A."/>
            <person name="Gill S.R."/>
            <person name="Chang R.F."/>
            <person name="Phan T.H."/>
            <person name="Chen J.H."/>
            <person name="Davidson M.G."/>
            <person name="Lin F."/>
            <person name="Lin J."/>
            <person name="Carleton H.A."/>
            <person name="Mongodin E.F."/>
            <person name="Sensabaugh G.F."/>
            <person name="Perdreau-Remington F."/>
        </authorList>
    </citation>
    <scope>NUCLEOTIDE SEQUENCE [LARGE SCALE GENOMIC DNA]</scope>
    <source>
        <strain>USA300</strain>
    </source>
</reference>
<accession>Q2FKF8</accession>
<sequence length="255" mass="29400">MKRLNKLVLYISFLILVISFTAGCGIGKEAEVKKSFEKTLSMYPIKNLEDLYDKEGYRDDEFDKNDKGTWIIGSEMVVQPKGERMKSKGMVLYMNRNTKTTTGKYIVSETLHDEDGRPKSKDKEYPVKMVDNKIIPTKGIKDENIKKEIENFKFFAQYGSFKDLSKYKDGDISYNPEVPSYSAKYQLTNDDYNVKQLRKRYKIPTNKAPKLLLKGSGDLKGSSVGYKDIEFTFVEKKGENTFFTDSLHLEPSEDK</sequence>
<protein>
    <recommendedName>
        <fullName>Uncharacterized lipoprotein SAUSA300_0103</fullName>
    </recommendedName>
</protein>
<gene>
    <name type="ordered locus">SAUSA300_0103</name>
</gene>
<dbReference type="EMBL" id="CP000255">
    <property type="protein sequence ID" value="ABD22779.1"/>
    <property type="molecule type" value="Genomic_DNA"/>
</dbReference>
<dbReference type="RefSeq" id="WP_000826311.1">
    <property type="nucleotide sequence ID" value="NZ_CP027476.1"/>
</dbReference>
<dbReference type="SMR" id="Q2FKF8"/>
<dbReference type="KEGG" id="saa:SAUSA300_0103"/>
<dbReference type="HOGENOM" id="CLU_071589_0_1_9"/>
<dbReference type="Proteomes" id="UP000001939">
    <property type="component" value="Chromosome"/>
</dbReference>
<dbReference type="GO" id="GO:0005886">
    <property type="term" value="C:plasma membrane"/>
    <property type="evidence" value="ECO:0007669"/>
    <property type="project" value="UniProtKB-SubCell"/>
</dbReference>
<dbReference type="Gene3D" id="2.50.20.40">
    <property type="match status" value="1"/>
</dbReference>
<dbReference type="InterPro" id="IPR007595">
    <property type="entry name" value="Csa"/>
</dbReference>
<dbReference type="InterPro" id="IPR038641">
    <property type="entry name" value="Csa_sf"/>
</dbReference>
<dbReference type="NCBIfam" id="TIGR01742">
    <property type="entry name" value="SA_tandem_lipo"/>
    <property type="match status" value="1"/>
</dbReference>
<dbReference type="Pfam" id="PF04507">
    <property type="entry name" value="DUF576"/>
    <property type="match status" value="1"/>
</dbReference>
<dbReference type="PROSITE" id="PS51257">
    <property type="entry name" value="PROKAR_LIPOPROTEIN"/>
    <property type="match status" value="1"/>
</dbReference>
<feature type="signal peptide" evidence="1">
    <location>
        <begin position="1"/>
        <end position="23"/>
    </location>
</feature>
<feature type="chain" id="PRO_0000282071" description="Uncharacterized lipoprotein SAUSA300_0103">
    <location>
        <begin position="24"/>
        <end position="255"/>
    </location>
</feature>
<feature type="lipid moiety-binding region" description="N-palmitoyl cysteine" evidence="1">
    <location>
        <position position="24"/>
    </location>
</feature>
<feature type="lipid moiety-binding region" description="S-diacylglycerol cysteine" evidence="1">
    <location>
        <position position="24"/>
    </location>
</feature>